<name>MTNN_LISMC</name>
<dbReference type="EC" id="3.2.2.9" evidence="1"/>
<dbReference type="EMBL" id="FM242711">
    <property type="protein sequence ID" value="CAS05266.1"/>
    <property type="molecule type" value="Genomic_DNA"/>
</dbReference>
<dbReference type="RefSeq" id="WP_003725969.1">
    <property type="nucleotide sequence ID" value="NC_012488.1"/>
</dbReference>
<dbReference type="SMR" id="C1KVE1"/>
<dbReference type="KEGG" id="lmc:Lm4b_01504"/>
<dbReference type="HOGENOM" id="CLU_031248_2_2_9"/>
<dbReference type="UniPathway" id="UPA00904">
    <property type="reaction ID" value="UER00871"/>
</dbReference>
<dbReference type="GO" id="GO:0005829">
    <property type="term" value="C:cytosol"/>
    <property type="evidence" value="ECO:0007669"/>
    <property type="project" value="TreeGrafter"/>
</dbReference>
<dbReference type="GO" id="GO:0008782">
    <property type="term" value="F:adenosylhomocysteine nucleosidase activity"/>
    <property type="evidence" value="ECO:0007669"/>
    <property type="project" value="UniProtKB-UniRule"/>
</dbReference>
<dbReference type="GO" id="GO:0008930">
    <property type="term" value="F:methylthioadenosine nucleosidase activity"/>
    <property type="evidence" value="ECO:0007669"/>
    <property type="project" value="UniProtKB-UniRule"/>
</dbReference>
<dbReference type="GO" id="GO:0019509">
    <property type="term" value="P:L-methionine salvage from methylthioadenosine"/>
    <property type="evidence" value="ECO:0007669"/>
    <property type="project" value="UniProtKB-UniRule"/>
</dbReference>
<dbReference type="GO" id="GO:0019284">
    <property type="term" value="P:L-methionine salvage from S-adenosylmethionine"/>
    <property type="evidence" value="ECO:0007669"/>
    <property type="project" value="TreeGrafter"/>
</dbReference>
<dbReference type="GO" id="GO:0009164">
    <property type="term" value="P:nucleoside catabolic process"/>
    <property type="evidence" value="ECO:0007669"/>
    <property type="project" value="InterPro"/>
</dbReference>
<dbReference type="CDD" id="cd09008">
    <property type="entry name" value="MTAN"/>
    <property type="match status" value="1"/>
</dbReference>
<dbReference type="FunFam" id="3.40.50.1580:FF:000001">
    <property type="entry name" value="MTA/SAH nucleosidase family protein"/>
    <property type="match status" value="1"/>
</dbReference>
<dbReference type="Gene3D" id="3.40.50.1580">
    <property type="entry name" value="Nucleoside phosphorylase domain"/>
    <property type="match status" value="1"/>
</dbReference>
<dbReference type="HAMAP" id="MF_01684">
    <property type="entry name" value="Salvage_MtnN"/>
    <property type="match status" value="1"/>
</dbReference>
<dbReference type="InterPro" id="IPR010049">
    <property type="entry name" value="MTA_SAH_Nsdase"/>
</dbReference>
<dbReference type="InterPro" id="IPR000845">
    <property type="entry name" value="Nucleoside_phosphorylase_d"/>
</dbReference>
<dbReference type="InterPro" id="IPR035994">
    <property type="entry name" value="Nucleoside_phosphorylase_sf"/>
</dbReference>
<dbReference type="NCBIfam" id="TIGR01704">
    <property type="entry name" value="MTA_SAH-Nsdase"/>
    <property type="match status" value="1"/>
</dbReference>
<dbReference type="NCBIfam" id="NF004079">
    <property type="entry name" value="PRK05584.1"/>
    <property type="match status" value="1"/>
</dbReference>
<dbReference type="PANTHER" id="PTHR46832">
    <property type="entry name" value="5'-METHYLTHIOADENOSINE/S-ADENOSYLHOMOCYSTEINE NUCLEOSIDASE"/>
    <property type="match status" value="1"/>
</dbReference>
<dbReference type="PANTHER" id="PTHR46832:SF1">
    <property type="entry name" value="5'-METHYLTHIOADENOSINE_S-ADENOSYLHOMOCYSTEINE NUCLEOSIDASE"/>
    <property type="match status" value="1"/>
</dbReference>
<dbReference type="Pfam" id="PF01048">
    <property type="entry name" value="PNP_UDP_1"/>
    <property type="match status" value="1"/>
</dbReference>
<dbReference type="SUPFAM" id="SSF53167">
    <property type="entry name" value="Purine and uridine phosphorylases"/>
    <property type="match status" value="1"/>
</dbReference>
<keyword id="KW-0028">Amino-acid biosynthesis</keyword>
<keyword id="KW-0378">Hydrolase</keyword>
<keyword id="KW-0486">Methionine biosynthesis</keyword>
<evidence type="ECO:0000255" key="1">
    <source>
        <dbReference type="HAMAP-Rule" id="MF_01684"/>
    </source>
</evidence>
<organism>
    <name type="scientific">Listeria monocytogenes serotype 4b (strain CLIP80459)</name>
    <dbReference type="NCBI Taxonomy" id="568819"/>
    <lineage>
        <taxon>Bacteria</taxon>
        <taxon>Bacillati</taxon>
        <taxon>Bacillota</taxon>
        <taxon>Bacilli</taxon>
        <taxon>Bacillales</taxon>
        <taxon>Listeriaceae</taxon>
        <taxon>Listeria</taxon>
    </lineage>
</organism>
<protein>
    <recommendedName>
        <fullName evidence="1">5'-methylthioadenosine/S-adenosylhomocysteine nucleosidase</fullName>
        <shortName evidence="1">MTA/SAH nucleosidase</shortName>
        <shortName evidence="1">MTAN</shortName>
        <ecNumber evidence="1">3.2.2.9</ecNumber>
    </recommendedName>
    <alternativeName>
        <fullName evidence="1">5'-deoxyadenosine nucleosidase</fullName>
        <shortName evidence="1">DOA nucleosidase</shortName>
        <shortName evidence="1">dAdo nucleosidase</shortName>
    </alternativeName>
    <alternativeName>
        <fullName evidence="1">5'-methylthioadenosine nucleosidase</fullName>
        <shortName evidence="1">MTA nucleosidase</shortName>
    </alternativeName>
    <alternativeName>
        <fullName evidence="1">S-adenosylhomocysteine nucleosidase</fullName>
        <shortName evidence="1">AdoHcy nucleosidase</shortName>
        <shortName evidence="1">SAH nucleosidase</shortName>
        <shortName evidence="1">SRH nucleosidase</shortName>
    </alternativeName>
</protein>
<proteinExistence type="inferred from homology"/>
<accession>C1KVE1</accession>
<gene>
    <name evidence="1" type="primary">mtnN</name>
    <name type="ordered locus">Lm4b_01504</name>
</gene>
<reference key="1">
    <citation type="journal article" date="2012" name="BMC Genomics">
        <title>Comparative genomics and transcriptomics of lineages I, II, and III strains of Listeria monocytogenes.</title>
        <authorList>
            <person name="Hain T."/>
            <person name="Ghai R."/>
            <person name="Billion A."/>
            <person name="Kuenne C.T."/>
            <person name="Steinweg C."/>
            <person name="Izar B."/>
            <person name="Mohamed W."/>
            <person name="Mraheil M."/>
            <person name="Domann E."/>
            <person name="Schaffrath S."/>
            <person name="Karst U."/>
            <person name="Goesmann A."/>
            <person name="Oehm S."/>
            <person name="Puhler A."/>
            <person name="Merkl R."/>
            <person name="Vorwerk S."/>
            <person name="Glaser P."/>
            <person name="Garrido P."/>
            <person name="Rusniok C."/>
            <person name="Buchrieser C."/>
            <person name="Goebel W."/>
            <person name="Chakraborty T."/>
        </authorList>
    </citation>
    <scope>NUCLEOTIDE SEQUENCE [LARGE SCALE GENOMIC DNA]</scope>
    <source>
        <strain>CLIP80459</strain>
    </source>
</reference>
<sequence length="233" mass="25305">MTIGIIGAMEEEVELLKNSMPSVEEIVIGGAKFYVGEIAGKEVVLLESGIGKVNAALGTTLMADRFKPEVIINTGSAGGMAEGLAVGDVIISDRLAYGDVDVTEFGYTYGQVPRMPAFYQGDAVLLKKAETIYREYFAASENKAVYGLVVTNDSFIMRPDQHETIRTFFPDVKAVEMEAAAIAQVAYQFDIPFLIIRAISDLANQEATISFDEFIHLAAKQSATCIIELLKTI</sequence>
<comment type="function">
    <text evidence="1">Catalyzes the irreversible cleavage of the glycosidic bond in both 5'-methylthioadenosine (MTA) and S-adenosylhomocysteine (SAH/AdoHcy) to adenine and the corresponding thioribose, 5'-methylthioribose and S-ribosylhomocysteine, respectively. Also cleaves 5'-deoxyadenosine, a toxic by-product of radical S-adenosylmethionine (SAM) enzymes, into 5-deoxyribose and adenine.</text>
</comment>
<comment type="catalytic activity">
    <reaction evidence="1">
        <text>S-adenosyl-L-homocysteine + H2O = S-(5-deoxy-D-ribos-5-yl)-L-homocysteine + adenine</text>
        <dbReference type="Rhea" id="RHEA:17805"/>
        <dbReference type="ChEBI" id="CHEBI:15377"/>
        <dbReference type="ChEBI" id="CHEBI:16708"/>
        <dbReference type="ChEBI" id="CHEBI:57856"/>
        <dbReference type="ChEBI" id="CHEBI:58195"/>
        <dbReference type="EC" id="3.2.2.9"/>
    </reaction>
</comment>
<comment type="catalytic activity">
    <reaction evidence="1">
        <text>S-methyl-5'-thioadenosine + H2O = 5-(methylsulfanyl)-D-ribose + adenine</text>
        <dbReference type="Rhea" id="RHEA:13617"/>
        <dbReference type="ChEBI" id="CHEBI:15377"/>
        <dbReference type="ChEBI" id="CHEBI:16708"/>
        <dbReference type="ChEBI" id="CHEBI:17509"/>
        <dbReference type="ChEBI" id="CHEBI:78440"/>
        <dbReference type="EC" id="3.2.2.9"/>
    </reaction>
</comment>
<comment type="catalytic activity">
    <reaction evidence="1">
        <text>5'-deoxyadenosine + H2O = 5-deoxy-D-ribose + adenine</text>
        <dbReference type="Rhea" id="RHEA:29859"/>
        <dbReference type="ChEBI" id="CHEBI:15377"/>
        <dbReference type="ChEBI" id="CHEBI:16708"/>
        <dbReference type="ChEBI" id="CHEBI:17319"/>
        <dbReference type="ChEBI" id="CHEBI:149540"/>
        <dbReference type="EC" id="3.2.2.9"/>
    </reaction>
    <physiologicalReaction direction="left-to-right" evidence="1">
        <dbReference type="Rhea" id="RHEA:29860"/>
    </physiologicalReaction>
</comment>
<comment type="pathway">
    <text evidence="1">Amino-acid biosynthesis; L-methionine biosynthesis via salvage pathway; S-methyl-5-thio-alpha-D-ribose 1-phosphate from S-methyl-5'-thioadenosine (hydrolase route): step 1/2.</text>
</comment>
<comment type="similarity">
    <text evidence="1">Belongs to the PNP/UDP phosphorylase family. MtnN subfamily.</text>
</comment>
<feature type="chain" id="PRO_1000215914" description="5'-methylthioadenosine/S-adenosylhomocysteine nucleosidase">
    <location>
        <begin position="1"/>
        <end position="233"/>
    </location>
</feature>
<feature type="active site" description="Proton acceptor" evidence="1">
    <location>
        <position position="12"/>
    </location>
</feature>
<feature type="active site" description="Proton donor" evidence="1">
    <location>
        <position position="201"/>
    </location>
</feature>
<feature type="binding site" evidence="1">
    <location>
        <position position="78"/>
    </location>
    <ligand>
        <name>substrate</name>
    </ligand>
</feature>
<feature type="binding site" evidence="1">
    <location>
        <position position="156"/>
    </location>
    <ligand>
        <name>substrate</name>
    </ligand>
</feature>
<feature type="binding site" evidence="1">
    <location>
        <begin position="177"/>
        <end position="178"/>
    </location>
    <ligand>
        <name>substrate</name>
    </ligand>
</feature>